<dbReference type="EC" id="4.3.2.10" evidence="1"/>
<dbReference type="EMBL" id="AP009552">
    <property type="protein sequence ID" value="BAG05116.1"/>
    <property type="molecule type" value="Genomic_DNA"/>
</dbReference>
<dbReference type="RefSeq" id="WP_012267656.1">
    <property type="nucleotide sequence ID" value="NC_010296.1"/>
</dbReference>
<dbReference type="SMR" id="B0JY78"/>
<dbReference type="STRING" id="449447.MAE_52940"/>
<dbReference type="PaxDb" id="449447-MAE_52940"/>
<dbReference type="EnsemblBacteria" id="BAG05116">
    <property type="protein sequence ID" value="BAG05116"/>
    <property type="gene ID" value="MAE_52940"/>
</dbReference>
<dbReference type="KEGG" id="mar:MAE_52940"/>
<dbReference type="PATRIC" id="fig|449447.4.peg.4825"/>
<dbReference type="eggNOG" id="COG0107">
    <property type="taxonomic scope" value="Bacteria"/>
</dbReference>
<dbReference type="HOGENOM" id="CLU_048577_4_0_3"/>
<dbReference type="BioCyc" id="MAER449447:MAE_RS23040-MONOMER"/>
<dbReference type="UniPathway" id="UPA00031">
    <property type="reaction ID" value="UER00010"/>
</dbReference>
<dbReference type="Proteomes" id="UP000001510">
    <property type="component" value="Chromosome"/>
</dbReference>
<dbReference type="GO" id="GO:0005737">
    <property type="term" value="C:cytoplasm"/>
    <property type="evidence" value="ECO:0007669"/>
    <property type="project" value="UniProtKB-SubCell"/>
</dbReference>
<dbReference type="GO" id="GO:0000107">
    <property type="term" value="F:imidazoleglycerol-phosphate synthase activity"/>
    <property type="evidence" value="ECO:0007669"/>
    <property type="project" value="UniProtKB-UniRule"/>
</dbReference>
<dbReference type="GO" id="GO:0016829">
    <property type="term" value="F:lyase activity"/>
    <property type="evidence" value="ECO:0007669"/>
    <property type="project" value="UniProtKB-KW"/>
</dbReference>
<dbReference type="GO" id="GO:0000105">
    <property type="term" value="P:L-histidine biosynthetic process"/>
    <property type="evidence" value="ECO:0007669"/>
    <property type="project" value="UniProtKB-UniRule"/>
</dbReference>
<dbReference type="CDD" id="cd04731">
    <property type="entry name" value="HisF"/>
    <property type="match status" value="1"/>
</dbReference>
<dbReference type="FunFam" id="3.20.20.70:FF:000006">
    <property type="entry name" value="Imidazole glycerol phosphate synthase subunit HisF"/>
    <property type="match status" value="1"/>
</dbReference>
<dbReference type="Gene3D" id="3.20.20.70">
    <property type="entry name" value="Aldolase class I"/>
    <property type="match status" value="1"/>
</dbReference>
<dbReference type="HAMAP" id="MF_01013">
    <property type="entry name" value="HisF"/>
    <property type="match status" value="1"/>
</dbReference>
<dbReference type="InterPro" id="IPR013785">
    <property type="entry name" value="Aldolase_TIM"/>
</dbReference>
<dbReference type="InterPro" id="IPR006062">
    <property type="entry name" value="His_biosynth"/>
</dbReference>
<dbReference type="InterPro" id="IPR004651">
    <property type="entry name" value="HisF"/>
</dbReference>
<dbReference type="InterPro" id="IPR050064">
    <property type="entry name" value="IGPS_HisA/HisF"/>
</dbReference>
<dbReference type="InterPro" id="IPR011060">
    <property type="entry name" value="RibuloseP-bd_barrel"/>
</dbReference>
<dbReference type="NCBIfam" id="TIGR00735">
    <property type="entry name" value="hisF"/>
    <property type="match status" value="1"/>
</dbReference>
<dbReference type="PANTHER" id="PTHR21235:SF2">
    <property type="entry name" value="IMIDAZOLE GLYCEROL PHOSPHATE SYNTHASE HISHF"/>
    <property type="match status" value="1"/>
</dbReference>
<dbReference type="PANTHER" id="PTHR21235">
    <property type="entry name" value="IMIDAZOLE GLYCEROL PHOSPHATE SYNTHASE SUBUNIT HISF/H IGP SYNTHASE SUBUNIT HISF/H"/>
    <property type="match status" value="1"/>
</dbReference>
<dbReference type="Pfam" id="PF00977">
    <property type="entry name" value="His_biosynth"/>
    <property type="match status" value="1"/>
</dbReference>
<dbReference type="SUPFAM" id="SSF51366">
    <property type="entry name" value="Ribulose-phoshate binding barrel"/>
    <property type="match status" value="1"/>
</dbReference>
<evidence type="ECO:0000255" key="1">
    <source>
        <dbReference type="HAMAP-Rule" id="MF_01013"/>
    </source>
</evidence>
<feature type="chain" id="PRO_1000084065" description="Imidazole glycerol phosphate synthase subunit HisF">
    <location>
        <begin position="1"/>
        <end position="254"/>
    </location>
</feature>
<feature type="active site" evidence="1">
    <location>
        <position position="11"/>
    </location>
</feature>
<feature type="active site" evidence="1">
    <location>
        <position position="130"/>
    </location>
</feature>
<name>HIS6_MICAN</name>
<keyword id="KW-0028">Amino-acid biosynthesis</keyword>
<keyword id="KW-0963">Cytoplasm</keyword>
<keyword id="KW-0368">Histidine biosynthesis</keyword>
<keyword id="KW-0456">Lyase</keyword>
<gene>
    <name evidence="1" type="primary">hisF</name>
    <name type="ordered locus">MAE_52940</name>
</gene>
<proteinExistence type="inferred from homology"/>
<accession>B0JY78</accession>
<reference key="1">
    <citation type="journal article" date="2007" name="DNA Res.">
        <title>Complete genomic structure of the bloom-forming toxic cyanobacterium Microcystis aeruginosa NIES-843.</title>
        <authorList>
            <person name="Kaneko T."/>
            <person name="Nakajima N."/>
            <person name="Okamoto S."/>
            <person name="Suzuki I."/>
            <person name="Tanabe Y."/>
            <person name="Tamaoki M."/>
            <person name="Nakamura Y."/>
            <person name="Kasai F."/>
            <person name="Watanabe A."/>
            <person name="Kawashima K."/>
            <person name="Kishida Y."/>
            <person name="Ono A."/>
            <person name="Shimizu Y."/>
            <person name="Takahashi C."/>
            <person name="Minami C."/>
            <person name="Fujishiro T."/>
            <person name="Kohara M."/>
            <person name="Katoh M."/>
            <person name="Nakazaki N."/>
            <person name="Nakayama S."/>
            <person name="Yamada M."/>
            <person name="Tabata S."/>
            <person name="Watanabe M.M."/>
        </authorList>
    </citation>
    <scope>NUCLEOTIDE SEQUENCE [LARGE SCALE GENOMIC DNA]</scope>
    <source>
        <strain>NIES-843 / IAM M-247</strain>
    </source>
</reference>
<comment type="function">
    <text evidence="1">IGPS catalyzes the conversion of PRFAR and glutamine to IGP, AICAR and glutamate. The HisF subunit catalyzes the cyclization activity that produces IGP and AICAR from PRFAR using the ammonia provided by the HisH subunit.</text>
</comment>
<comment type="catalytic activity">
    <reaction evidence="1">
        <text>5-[(5-phospho-1-deoxy-D-ribulos-1-ylimino)methylamino]-1-(5-phospho-beta-D-ribosyl)imidazole-4-carboxamide + L-glutamine = D-erythro-1-(imidazol-4-yl)glycerol 3-phosphate + 5-amino-1-(5-phospho-beta-D-ribosyl)imidazole-4-carboxamide + L-glutamate + H(+)</text>
        <dbReference type="Rhea" id="RHEA:24793"/>
        <dbReference type="ChEBI" id="CHEBI:15378"/>
        <dbReference type="ChEBI" id="CHEBI:29985"/>
        <dbReference type="ChEBI" id="CHEBI:58278"/>
        <dbReference type="ChEBI" id="CHEBI:58359"/>
        <dbReference type="ChEBI" id="CHEBI:58475"/>
        <dbReference type="ChEBI" id="CHEBI:58525"/>
        <dbReference type="EC" id="4.3.2.10"/>
    </reaction>
</comment>
<comment type="pathway">
    <text evidence="1">Amino-acid biosynthesis; L-histidine biosynthesis; L-histidine from 5-phospho-alpha-D-ribose 1-diphosphate: step 5/9.</text>
</comment>
<comment type="subunit">
    <text evidence="1">Heterodimer of HisH and HisF.</text>
</comment>
<comment type="subcellular location">
    <subcellularLocation>
        <location evidence="1">Cytoplasm</location>
    </subcellularLocation>
</comment>
<comment type="similarity">
    <text evidence="1">Belongs to the HisA/HisF family.</text>
</comment>
<organism>
    <name type="scientific">Microcystis aeruginosa (strain NIES-843 / IAM M-2473)</name>
    <dbReference type="NCBI Taxonomy" id="449447"/>
    <lineage>
        <taxon>Bacteria</taxon>
        <taxon>Bacillati</taxon>
        <taxon>Cyanobacteriota</taxon>
        <taxon>Cyanophyceae</taxon>
        <taxon>Oscillatoriophycideae</taxon>
        <taxon>Chroococcales</taxon>
        <taxon>Microcystaceae</taxon>
        <taxon>Microcystis</taxon>
    </lineage>
</organism>
<protein>
    <recommendedName>
        <fullName evidence="1">Imidazole glycerol phosphate synthase subunit HisF</fullName>
        <ecNumber evidence="1">4.3.2.10</ecNumber>
    </recommendedName>
    <alternativeName>
        <fullName evidence="1">IGP synthase cyclase subunit</fullName>
    </alternativeName>
    <alternativeName>
        <fullName evidence="1">IGP synthase subunit HisF</fullName>
    </alternativeName>
    <alternativeName>
        <fullName evidence="1">ImGP synthase subunit HisF</fullName>
        <shortName evidence="1">IGPS subunit HisF</shortName>
    </alternativeName>
</protein>
<sequence>MLAKRILPCLDVNKGRVVKGVNFVNLQDAGDPVELARLYNQAGADELVFLDITATHEDRDTIIDVVYRTAEQVFIPLTVGGGIQSLENIKNLLRAGADKVSINSAAVREPELLDRASDRFGKQCIVVAIDARRRKDEHNPGWEVYVRGGRKNTGIDALLWAQEVEKRGAGELLVTSMDADGTQAGYDLALTKAIAERVEIPVIASGGAGNCQHIYEALTEGRAEAALLASLLHYGQLTIAEVKNYLQNQQVPVR</sequence>